<comment type="function">
    <text>Could act as a modulator of transcription.</text>
</comment>
<comment type="interaction">
    <interactant intactId="EBI-745513">
        <id>O60224</id>
    </interactant>
    <interactant intactId="EBI-725606">
        <id>Q9NWQ9</id>
        <label>C14orf119</label>
    </interactant>
    <organismsDiffer>false</organismsDiffer>
    <experiments>3</experiments>
</comment>
<comment type="interaction">
    <interactant intactId="EBI-745513">
        <id>O60224</id>
    </interactant>
    <interactant intactId="EBI-11533409">
        <id>Q96Q35-2</id>
        <label>FLACC1</label>
    </interactant>
    <organismsDiffer>false</organismsDiffer>
    <experiments>3</experiments>
</comment>
<comment type="interaction">
    <interactant intactId="EBI-745513">
        <id>O60224</id>
    </interactant>
    <interactant intactId="EBI-447269">
        <id>Q16665</id>
        <label>HIF1A</label>
    </interactant>
    <organismsDiffer>false</organismsDiffer>
    <experiments>5</experiments>
</comment>
<comment type="alternative products">
    <event type="alternative splicing"/>
    <isoform>
        <id>O60224-1</id>
        <name>1</name>
        <sequence type="displayed"/>
    </isoform>
    <isoform>
        <id>O60224-2</id>
        <name>2</name>
        <sequence type="described" ref="VSP_054114 VSP_054115"/>
    </isoform>
</comment>
<comment type="similarity">
    <text evidence="4">Belongs to the SSX family.</text>
</comment>
<comment type="sequence caution" evidence="4">
    <conflict type="miscellaneous discrepancy">
        <sequence resource="EMBL-CDS" id="AAI03865"/>
    </conflict>
    <text>Several sequencing errors.</text>
</comment>
<sequence>MNGDDAFARRPRDDAQISEKLRKAFDDIAKYFSKKEWEKMKSSEKIVYVYMKLNYEVMTKLGFKVTLPPFMRSKRAADFHGNDFGNDRNHRNQVERPQMTFGSLQRIFPKIMPKKPAEEENGLKEVPEASGPQNDGKQLCPPGNPSTLEKINKTSGPKRGKHAWTHRLRERKQLVVYEEISDPEEDDE</sequence>
<name>SSX4_HUMAN</name>
<feature type="chain" id="PRO_0000181831" description="Protein SSX4">
    <location>
        <begin position="1"/>
        <end position="188"/>
    </location>
</feature>
<feature type="domain" description="KRAB-related" evidence="1">
    <location>
        <begin position="20"/>
        <end position="83"/>
    </location>
</feature>
<feature type="region of interest" description="Disordered" evidence="2">
    <location>
        <begin position="116"/>
        <end position="167"/>
    </location>
</feature>
<feature type="compositionally biased region" description="Basic and acidic residues" evidence="2">
    <location>
        <begin position="116"/>
        <end position="127"/>
    </location>
</feature>
<feature type="compositionally biased region" description="Polar residues" evidence="2">
    <location>
        <begin position="145"/>
        <end position="155"/>
    </location>
</feature>
<feature type="compositionally biased region" description="Basic residues" evidence="2">
    <location>
        <begin position="156"/>
        <end position="167"/>
    </location>
</feature>
<feature type="splice variant" id="VSP_054114" description="In isoform 2." evidence="3">
    <original>IMPKKPAEEENGLKEVPEASGPQNDGKQLCPPGNPSTLEKINK</original>
    <variation>DPKGGNMPGPTDCVRESSWWFMKRSATLRKMTSNSPRGYDTCP</variation>
    <location>
        <begin position="111"/>
        <end position="153"/>
    </location>
</feature>
<feature type="splice variant" id="VSP_054115" description="In isoform 2." evidence="3">
    <location>
        <begin position="154"/>
        <end position="188"/>
    </location>
</feature>
<reference key="1">
    <citation type="journal article" date="1997" name="Int. J. Cancer">
        <title>SSX: a multigene family with several members transcribed in normal testis and human cancer.</title>
        <authorList>
            <person name="Gure A.O."/>
            <person name="Tuereci O."/>
            <person name="Sahin U."/>
            <person name="Tsang S."/>
            <person name="Scanlan M.J."/>
            <person name="Jager E."/>
            <person name="Knuth A."/>
            <person name="Pfreundschuh M."/>
            <person name="Old L.J."/>
            <person name="Chen Y.-T."/>
        </authorList>
    </citation>
    <scope>NUCLEOTIDE SEQUENCE [MRNA] (ISOFORM 1)</scope>
</reference>
<reference key="2">
    <citation type="journal article" date="2005" name="Nature">
        <title>The DNA sequence of the human X chromosome.</title>
        <authorList>
            <person name="Ross M.T."/>
            <person name="Grafham D.V."/>
            <person name="Coffey A.J."/>
            <person name="Scherer S."/>
            <person name="McLay K."/>
            <person name="Muzny D."/>
            <person name="Platzer M."/>
            <person name="Howell G.R."/>
            <person name="Burrows C."/>
            <person name="Bird C.P."/>
            <person name="Frankish A."/>
            <person name="Lovell F.L."/>
            <person name="Howe K.L."/>
            <person name="Ashurst J.L."/>
            <person name="Fulton R.S."/>
            <person name="Sudbrak R."/>
            <person name="Wen G."/>
            <person name="Jones M.C."/>
            <person name="Hurles M.E."/>
            <person name="Andrews T.D."/>
            <person name="Scott C.E."/>
            <person name="Searle S."/>
            <person name="Ramser J."/>
            <person name="Whittaker A."/>
            <person name="Deadman R."/>
            <person name="Carter N.P."/>
            <person name="Hunt S.E."/>
            <person name="Chen R."/>
            <person name="Cree A."/>
            <person name="Gunaratne P."/>
            <person name="Havlak P."/>
            <person name="Hodgson A."/>
            <person name="Metzker M.L."/>
            <person name="Richards S."/>
            <person name="Scott G."/>
            <person name="Steffen D."/>
            <person name="Sodergren E."/>
            <person name="Wheeler D.A."/>
            <person name="Worley K.C."/>
            <person name="Ainscough R."/>
            <person name="Ambrose K.D."/>
            <person name="Ansari-Lari M.A."/>
            <person name="Aradhya S."/>
            <person name="Ashwell R.I."/>
            <person name="Babbage A.K."/>
            <person name="Bagguley C.L."/>
            <person name="Ballabio A."/>
            <person name="Banerjee R."/>
            <person name="Barker G.E."/>
            <person name="Barlow K.F."/>
            <person name="Barrett I.P."/>
            <person name="Bates K.N."/>
            <person name="Beare D.M."/>
            <person name="Beasley H."/>
            <person name="Beasley O."/>
            <person name="Beck A."/>
            <person name="Bethel G."/>
            <person name="Blechschmidt K."/>
            <person name="Brady N."/>
            <person name="Bray-Allen S."/>
            <person name="Bridgeman A.M."/>
            <person name="Brown A.J."/>
            <person name="Brown M.J."/>
            <person name="Bonnin D."/>
            <person name="Bruford E.A."/>
            <person name="Buhay C."/>
            <person name="Burch P."/>
            <person name="Burford D."/>
            <person name="Burgess J."/>
            <person name="Burrill W."/>
            <person name="Burton J."/>
            <person name="Bye J.M."/>
            <person name="Carder C."/>
            <person name="Carrel L."/>
            <person name="Chako J."/>
            <person name="Chapman J.C."/>
            <person name="Chavez D."/>
            <person name="Chen E."/>
            <person name="Chen G."/>
            <person name="Chen Y."/>
            <person name="Chen Z."/>
            <person name="Chinault C."/>
            <person name="Ciccodicola A."/>
            <person name="Clark S.Y."/>
            <person name="Clarke G."/>
            <person name="Clee C.M."/>
            <person name="Clegg S."/>
            <person name="Clerc-Blankenburg K."/>
            <person name="Clifford K."/>
            <person name="Cobley V."/>
            <person name="Cole C.G."/>
            <person name="Conquer J.S."/>
            <person name="Corby N."/>
            <person name="Connor R.E."/>
            <person name="David R."/>
            <person name="Davies J."/>
            <person name="Davis C."/>
            <person name="Davis J."/>
            <person name="Delgado O."/>
            <person name="Deshazo D."/>
            <person name="Dhami P."/>
            <person name="Ding Y."/>
            <person name="Dinh H."/>
            <person name="Dodsworth S."/>
            <person name="Draper H."/>
            <person name="Dugan-Rocha S."/>
            <person name="Dunham A."/>
            <person name="Dunn M."/>
            <person name="Durbin K.J."/>
            <person name="Dutta I."/>
            <person name="Eades T."/>
            <person name="Ellwood M."/>
            <person name="Emery-Cohen A."/>
            <person name="Errington H."/>
            <person name="Evans K.L."/>
            <person name="Faulkner L."/>
            <person name="Francis F."/>
            <person name="Frankland J."/>
            <person name="Fraser A.E."/>
            <person name="Galgoczy P."/>
            <person name="Gilbert J."/>
            <person name="Gill R."/>
            <person name="Gloeckner G."/>
            <person name="Gregory S.G."/>
            <person name="Gribble S."/>
            <person name="Griffiths C."/>
            <person name="Grocock R."/>
            <person name="Gu Y."/>
            <person name="Gwilliam R."/>
            <person name="Hamilton C."/>
            <person name="Hart E.A."/>
            <person name="Hawes A."/>
            <person name="Heath P.D."/>
            <person name="Heitmann K."/>
            <person name="Hennig S."/>
            <person name="Hernandez J."/>
            <person name="Hinzmann B."/>
            <person name="Ho S."/>
            <person name="Hoffs M."/>
            <person name="Howden P.J."/>
            <person name="Huckle E.J."/>
            <person name="Hume J."/>
            <person name="Hunt P.J."/>
            <person name="Hunt A.R."/>
            <person name="Isherwood J."/>
            <person name="Jacob L."/>
            <person name="Johnson D."/>
            <person name="Jones S."/>
            <person name="de Jong P.J."/>
            <person name="Joseph S.S."/>
            <person name="Keenan S."/>
            <person name="Kelly S."/>
            <person name="Kershaw J.K."/>
            <person name="Khan Z."/>
            <person name="Kioschis P."/>
            <person name="Klages S."/>
            <person name="Knights A.J."/>
            <person name="Kosiura A."/>
            <person name="Kovar-Smith C."/>
            <person name="Laird G.K."/>
            <person name="Langford C."/>
            <person name="Lawlor S."/>
            <person name="Leversha M."/>
            <person name="Lewis L."/>
            <person name="Liu W."/>
            <person name="Lloyd C."/>
            <person name="Lloyd D.M."/>
            <person name="Loulseged H."/>
            <person name="Loveland J.E."/>
            <person name="Lovell J.D."/>
            <person name="Lozado R."/>
            <person name="Lu J."/>
            <person name="Lyne R."/>
            <person name="Ma J."/>
            <person name="Maheshwari M."/>
            <person name="Matthews L.H."/>
            <person name="McDowall J."/>
            <person name="McLaren S."/>
            <person name="McMurray A."/>
            <person name="Meidl P."/>
            <person name="Meitinger T."/>
            <person name="Milne S."/>
            <person name="Miner G."/>
            <person name="Mistry S.L."/>
            <person name="Morgan M."/>
            <person name="Morris S."/>
            <person name="Mueller I."/>
            <person name="Mullikin J.C."/>
            <person name="Nguyen N."/>
            <person name="Nordsiek G."/>
            <person name="Nyakatura G."/>
            <person name="O'dell C.N."/>
            <person name="Okwuonu G."/>
            <person name="Palmer S."/>
            <person name="Pandian R."/>
            <person name="Parker D."/>
            <person name="Parrish J."/>
            <person name="Pasternak S."/>
            <person name="Patel D."/>
            <person name="Pearce A.V."/>
            <person name="Pearson D.M."/>
            <person name="Pelan S.E."/>
            <person name="Perez L."/>
            <person name="Porter K.M."/>
            <person name="Ramsey Y."/>
            <person name="Reichwald K."/>
            <person name="Rhodes S."/>
            <person name="Ridler K.A."/>
            <person name="Schlessinger D."/>
            <person name="Schueler M.G."/>
            <person name="Sehra H.K."/>
            <person name="Shaw-Smith C."/>
            <person name="Shen H."/>
            <person name="Sheridan E.M."/>
            <person name="Shownkeen R."/>
            <person name="Skuce C.D."/>
            <person name="Smith M.L."/>
            <person name="Sotheran E.C."/>
            <person name="Steingruber H.E."/>
            <person name="Steward C.A."/>
            <person name="Storey R."/>
            <person name="Swann R.M."/>
            <person name="Swarbreck D."/>
            <person name="Tabor P.E."/>
            <person name="Taudien S."/>
            <person name="Taylor T."/>
            <person name="Teague B."/>
            <person name="Thomas K."/>
            <person name="Thorpe A."/>
            <person name="Timms K."/>
            <person name="Tracey A."/>
            <person name="Trevanion S."/>
            <person name="Tromans A.C."/>
            <person name="d'Urso M."/>
            <person name="Verduzco D."/>
            <person name="Villasana D."/>
            <person name="Waldron L."/>
            <person name="Wall M."/>
            <person name="Wang Q."/>
            <person name="Warren J."/>
            <person name="Warry G.L."/>
            <person name="Wei X."/>
            <person name="West A."/>
            <person name="Whitehead S.L."/>
            <person name="Whiteley M.N."/>
            <person name="Wilkinson J.E."/>
            <person name="Willey D.L."/>
            <person name="Williams G."/>
            <person name="Williams L."/>
            <person name="Williamson A."/>
            <person name="Williamson H."/>
            <person name="Wilming L."/>
            <person name="Woodmansey R.L."/>
            <person name="Wray P.W."/>
            <person name="Yen J."/>
            <person name="Zhang J."/>
            <person name="Zhou J."/>
            <person name="Zoghbi H."/>
            <person name="Zorilla S."/>
            <person name="Buck D."/>
            <person name="Reinhardt R."/>
            <person name="Poustka A."/>
            <person name="Rosenthal A."/>
            <person name="Lehrach H."/>
            <person name="Meindl A."/>
            <person name="Minx P.J."/>
            <person name="Hillier L.W."/>
            <person name="Willard H.F."/>
            <person name="Wilson R.K."/>
            <person name="Waterston R.H."/>
            <person name="Rice C.M."/>
            <person name="Vaudin M."/>
            <person name="Coulson A."/>
            <person name="Nelson D.L."/>
            <person name="Weinstock G."/>
            <person name="Sulston J.E."/>
            <person name="Durbin R.M."/>
            <person name="Hubbard T."/>
            <person name="Gibbs R.A."/>
            <person name="Beck S."/>
            <person name="Rogers J."/>
            <person name="Bentley D.R."/>
        </authorList>
    </citation>
    <scope>NUCLEOTIDE SEQUENCE [LARGE SCALE GENOMIC DNA]</scope>
</reference>
<reference key="3">
    <citation type="journal article" date="2004" name="Genome Res.">
        <title>The status, quality, and expansion of the NIH full-length cDNA project: the Mammalian Gene Collection (MGC).</title>
        <authorList>
            <consortium name="The MGC Project Team"/>
        </authorList>
    </citation>
    <scope>NUCLEOTIDE SEQUENCE [LARGE SCALE MRNA] (ISOFORMS 1 AND 2)</scope>
    <source>
        <tissue>Urinary bladder</tissue>
    </source>
</reference>
<keyword id="KW-0025">Alternative splicing</keyword>
<keyword id="KW-1267">Proteomics identification</keyword>
<keyword id="KW-1185">Reference proteome</keyword>
<keyword id="KW-0804">Transcription</keyword>
<keyword id="KW-0805">Transcription regulation</keyword>
<protein>
    <recommendedName>
        <fullName>Protein SSX4</fullName>
    </recommendedName>
    <alternativeName>
        <fullName>Cancer/testis antigen 5.4</fullName>
        <shortName>CT5.4</shortName>
    </alternativeName>
</protein>
<dbReference type="EMBL" id="U90841">
    <property type="protein sequence ID" value="AAC05820.1"/>
    <property type="molecule type" value="mRNA"/>
</dbReference>
<dbReference type="EMBL" id="AF196972">
    <property type="status" value="NOT_ANNOTATED_CDS"/>
    <property type="molecule type" value="Genomic_DNA"/>
</dbReference>
<dbReference type="EMBL" id="AL606490">
    <property type="status" value="NOT_ANNOTATED_CDS"/>
    <property type="molecule type" value="Genomic_DNA"/>
</dbReference>
<dbReference type="EMBL" id="BC005325">
    <property type="protein sequence ID" value="AAH05325.1"/>
    <property type="molecule type" value="mRNA"/>
</dbReference>
<dbReference type="EMBL" id="BC103864">
    <property type="protein sequence ID" value="AAI03865.1"/>
    <property type="status" value="ALT_SEQ"/>
    <property type="molecule type" value="mRNA"/>
</dbReference>
<dbReference type="EMBL" id="BC137394">
    <property type="protein sequence ID" value="AAI37395.1"/>
    <property type="molecule type" value="mRNA"/>
</dbReference>
<dbReference type="EMBL" id="BC137395">
    <property type="protein sequence ID" value="AAI37396.1"/>
    <property type="molecule type" value="mRNA"/>
</dbReference>
<dbReference type="CCDS" id="CCDS35240.1">
    <molecule id="O60224-1"/>
</dbReference>
<dbReference type="CCDS" id="CCDS35241.1">
    <molecule id="O60224-1"/>
</dbReference>
<dbReference type="CCDS" id="CCDS43934.1">
    <molecule id="O60224-2"/>
</dbReference>
<dbReference type="CCDS" id="CCDS43935.1">
    <molecule id="O60224-2"/>
</dbReference>
<dbReference type="RefSeq" id="NP_001030004.1">
    <molecule id="O60224-1"/>
    <property type="nucleotide sequence ID" value="NM_001034832.3"/>
</dbReference>
<dbReference type="RefSeq" id="NP_001035702.1">
    <molecule id="O60224-2"/>
    <property type="nucleotide sequence ID" value="NM_001040612.2"/>
</dbReference>
<dbReference type="RefSeq" id="NP_005627.1">
    <molecule id="O60224-1"/>
    <property type="nucleotide sequence ID" value="NM_005636.4"/>
</dbReference>
<dbReference type="RefSeq" id="NP_783856.1">
    <molecule id="O60224-2"/>
    <property type="nucleotide sequence ID" value="NM_175729.2"/>
</dbReference>
<dbReference type="RefSeq" id="XP_016885102.1">
    <molecule id="O60224-1"/>
    <property type="nucleotide sequence ID" value="XM_017029613.1"/>
</dbReference>
<dbReference type="RefSeq" id="XP_016885248.1">
    <molecule id="O60224-1"/>
    <property type="nucleotide sequence ID" value="XM_017029759.2"/>
</dbReference>
<dbReference type="RefSeq" id="XP_054183600.1">
    <molecule id="O60224-1"/>
    <property type="nucleotide sequence ID" value="XM_054327625.1"/>
</dbReference>
<dbReference type="SMR" id="O60224"/>
<dbReference type="BioGRID" id="112637">
    <property type="interactions" value="10"/>
</dbReference>
<dbReference type="BioGRID" id="139210">
    <property type="interactions" value="2"/>
</dbReference>
<dbReference type="FunCoup" id="O60224">
    <property type="interactions" value="241"/>
</dbReference>
<dbReference type="IntAct" id="O60224">
    <property type="interactions" value="14"/>
</dbReference>
<dbReference type="MINT" id="O60224"/>
<dbReference type="STRING" id="9606.ENSP00000469011"/>
<dbReference type="iPTMnet" id="O60224"/>
<dbReference type="PhosphoSitePlus" id="O60224"/>
<dbReference type="BioMuta" id="SSX4"/>
<dbReference type="MassIVE" id="O60224"/>
<dbReference type="PaxDb" id="9606-ENSP00000469011"/>
<dbReference type="PeptideAtlas" id="O60224"/>
<dbReference type="ProteomicsDB" id="2393"/>
<dbReference type="ProteomicsDB" id="49249">
    <molecule id="O60224-1"/>
</dbReference>
<dbReference type="Antibodypedia" id="72375">
    <property type="antibodies" value="179 antibodies from 23 providers"/>
</dbReference>
<dbReference type="Antibodypedia" id="76700">
    <property type="antibodies" value="25 antibodies from 7 providers"/>
</dbReference>
<dbReference type="DNASU" id="6759"/>
<dbReference type="Ensembl" id="ENST00000595235.6">
    <molecule id="O60224-1"/>
    <property type="protein sequence ID" value="ENSP00000469394.1"/>
    <property type="gene ID" value="ENSG00000269791.6"/>
</dbReference>
<dbReference type="Ensembl" id="ENST00000595689.3">
    <molecule id="O60224-1"/>
    <property type="protein sequence ID" value="ENSP00000469011.1"/>
    <property type="gene ID" value="ENSG00000268009.6"/>
</dbReference>
<dbReference type="Ensembl" id="ENST00000619890.1">
    <molecule id="O60224-2"/>
    <property type="protein sequence ID" value="ENSP00000481765.1"/>
    <property type="gene ID" value="ENSG00000269791.6"/>
</dbReference>
<dbReference type="Ensembl" id="ENST00000620320.4">
    <molecule id="O60224-2"/>
    <property type="protein sequence ID" value="ENSP00000483262.1"/>
    <property type="gene ID" value="ENSG00000268009.6"/>
</dbReference>
<dbReference type="GeneID" id="548313"/>
<dbReference type="GeneID" id="6759"/>
<dbReference type="KEGG" id="hsa:548313"/>
<dbReference type="KEGG" id="hsa:6759"/>
<dbReference type="MANE-Select" id="ENST00000595235.6">
    <property type="protein sequence ID" value="ENSP00000469394.1"/>
    <property type="RefSeq nucleotide sequence ID" value="NM_001034832.5"/>
    <property type="RefSeq protein sequence ID" value="NP_001030004.1"/>
</dbReference>
<dbReference type="MANE-Select" id="ENST00000595689.3">
    <property type="protein sequence ID" value="ENSP00000469011.1"/>
    <property type="RefSeq nucleotide sequence ID" value="NM_005636.4"/>
    <property type="RefSeq protein sequence ID" value="NP_005627.1"/>
</dbReference>
<dbReference type="UCSC" id="uc004djf.3">
    <molecule id="O60224-1"/>
    <property type="organism name" value="human"/>
</dbReference>
<dbReference type="AGR" id="HGNC:11338"/>
<dbReference type="AGR" id="HGNC:16880"/>
<dbReference type="CTD" id="548313"/>
<dbReference type="CTD" id="6759"/>
<dbReference type="DisGeNET" id="6759"/>
<dbReference type="GeneCards" id="SSX4"/>
<dbReference type="GeneCards" id="SSX4B"/>
<dbReference type="HGNC" id="HGNC:11338">
    <property type="gene designation" value="SSX4"/>
</dbReference>
<dbReference type="HGNC" id="HGNC:16880">
    <property type="gene designation" value="SSX4B"/>
</dbReference>
<dbReference type="HPA" id="ENSG00000268009">
    <property type="expression patterns" value="Tissue enriched (testis)"/>
</dbReference>
<dbReference type="HPA" id="ENSG00000269791">
    <property type="expression patterns" value="Tissue enriched (testis)"/>
</dbReference>
<dbReference type="MalaCards" id="SSX4B"/>
<dbReference type="MIM" id="300326">
    <property type="type" value="gene"/>
</dbReference>
<dbReference type="neXtProt" id="NX_O60224"/>
<dbReference type="OpenTargets" id="ENSG00000268009"/>
<dbReference type="OpenTargets" id="ENSG00000269791"/>
<dbReference type="PharmGKB" id="PA36162"/>
<dbReference type="VEuPathDB" id="HostDB:ENSG00000268009"/>
<dbReference type="VEuPathDB" id="HostDB:ENSG00000269791"/>
<dbReference type="eggNOG" id="ENOG502RU1A">
    <property type="taxonomic scope" value="Eukaryota"/>
</dbReference>
<dbReference type="GeneTree" id="ENSGT00390000012484"/>
<dbReference type="HOGENOM" id="CLU_097196_1_0_1"/>
<dbReference type="InParanoid" id="O60224"/>
<dbReference type="OMA" id="PFMCSEP"/>
<dbReference type="OrthoDB" id="9587513at2759"/>
<dbReference type="PAN-GO" id="O60224">
    <property type="GO annotations" value="1 GO annotation based on evolutionary models"/>
</dbReference>
<dbReference type="PhylomeDB" id="O60224"/>
<dbReference type="TreeFam" id="TF338517"/>
<dbReference type="PathwayCommons" id="O60224"/>
<dbReference type="SignaLink" id="O60224"/>
<dbReference type="BioGRID-ORCS" id="548313">
    <property type="hits" value="9 hits in 651 CRISPR screens"/>
</dbReference>
<dbReference type="BioGRID-ORCS" id="6759">
    <property type="hits" value="209 hits in 643 CRISPR screens"/>
</dbReference>
<dbReference type="ChiTaRS" id="SSX4">
    <property type="organism name" value="human"/>
</dbReference>
<dbReference type="ChiTaRS" id="SSX4B">
    <property type="organism name" value="human"/>
</dbReference>
<dbReference type="GeneWiki" id="SSX4_(gene)"/>
<dbReference type="Pharos" id="O60224">
    <property type="development level" value="Tbio"/>
</dbReference>
<dbReference type="PRO" id="PR:O60224"/>
<dbReference type="Proteomes" id="UP000005640">
    <property type="component" value="Chromosome X"/>
</dbReference>
<dbReference type="RNAct" id="O60224">
    <property type="molecule type" value="protein"/>
</dbReference>
<dbReference type="Bgee" id="ENSG00000268009">
    <property type="expression patterns" value="Expressed in male germ line stem cell (sensu Vertebrata) in testis and 20 other cell types or tissues"/>
</dbReference>
<dbReference type="GO" id="GO:0005634">
    <property type="term" value="C:nucleus"/>
    <property type="evidence" value="ECO:0000318"/>
    <property type="project" value="GO_Central"/>
</dbReference>
<dbReference type="GO" id="GO:0006355">
    <property type="term" value="P:regulation of DNA-templated transcription"/>
    <property type="evidence" value="ECO:0007669"/>
    <property type="project" value="InterPro"/>
</dbReference>
<dbReference type="InterPro" id="IPR003655">
    <property type="entry name" value="aKRAB"/>
</dbReference>
<dbReference type="InterPro" id="IPR001909">
    <property type="entry name" value="KRAB"/>
</dbReference>
<dbReference type="InterPro" id="IPR036051">
    <property type="entry name" value="KRAB_dom_sf"/>
</dbReference>
<dbReference type="InterPro" id="IPR019041">
    <property type="entry name" value="SSXRD_motif"/>
</dbReference>
<dbReference type="PANTHER" id="PTHR14112:SF8">
    <property type="entry name" value="PROTEIN SSX4"/>
    <property type="match status" value="1"/>
</dbReference>
<dbReference type="PANTHER" id="PTHR14112">
    <property type="entry name" value="SYNOVIAL SARCOMA, X MEMBER"/>
    <property type="match status" value="1"/>
</dbReference>
<dbReference type="Pfam" id="PF09514">
    <property type="entry name" value="SSXRD"/>
    <property type="match status" value="1"/>
</dbReference>
<dbReference type="SMART" id="SM00349">
    <property type="entry name" value="KRAB"/>
    <property type="match status" value="1"/>
</dbReference>
<dbReference type="SUPFAM" id="SSF109640">
    <property type="entry name" value="KRAB domain (Kruppel-associated box)"/>
    <property type="match status" value="1"/>
</dbReference>
<dbReference type="PROSITE" id="PS50806">
    <property type="entry name" value="KRAB_RELATED"/>
    <property type="match status" value="1"/>
</dbReference>
<proteinExistence type="evidence at protein level"/>
<gene>
    <name type="primary">SSX4</name>
    <name type="synonym">SSX4A</name>
</gene>
<gene>
    <name type="primary">SSX4B</name>
</gene>
<evidence type="ECO:0000255" key="1">
    <source>
        <dbReference type="PROSITE-ProRule" id="PRU00120"/>
    </source>
</evidence>
<evidence type="ECO:0000256" key="2">
    <source>
        <dbReference type="SAM" id="MobiDB-lite"/>
    </source>
</evidence>
<evidence type="ECO:0000303" key="3">
    <source>
    </source>
</evidence>
<evidence type="ECO:0000305" key="4"/>
<accession>O60224</accession>
<accession>A8MYD4</accession>
<accession>B2RPE3</accession>
<accession>Q3SYD4</accession>
<accession>Q5JQZ0</accession>
<accession>Q9UJU9</accession>
<organism>
    <name type="scientific">Homo sapiens</name>
    <name type="common">Human</name>
    <dbReference type="NCBI Taxonomy" id="9606"/>
    <lineage>
        <taxon>Eukaryota</taxon>
        <taxon>Metazoa</taxon>
        <taxon>Chordata</taxon>
        <taxon>Craniata</taxon>
        <taxon>Vertebrata</taxon>
        <taxon>Euteleostomi</taxon>
        <taxon>Mammalia</taxon>
        <taxon>Eutheria</taxon>
        <taxon>Euarchontoglires</taxon>
        <taxon>Primates</taxon>
        <taxon>Haplorrhini</taxon>
        <taxon>Catarrhini</taxon>
        <taxon>Hominidae</taxon>
        <taxon>Homo</taxon>
    </lineage>
</organism>